<name>LR37B_HUMAN</name>
<sequence length="947" mass="105567">MSWLRFWGPWPLLTWQLLSLLVKEAQPLVWVKDPLQLTSNPLGPPEPWSSRSSHLPWESPHAPAPPAAPGDFDYLGPSASSQMSALPQEPTENLAPFLKELDSAGELPLGPEPFLAAHQDLNDKRTPEERLPEVVPLLNRDQNQALVQLPRLKWVQTTDLDRAAGHQADEILVPLDSKVSRPTKFVVSPKNLKKDLAERWSLPEIVGIPHQLSKPQRQKQTLPDDYLSMDTLYPGSLPPELRVNADEPPGPPEQVGLSQFHLEPKSQNPETLEDIQSSSLQEEAPAQLLQLPQEVEPSTQQEAPALPPESSMESLAQTPLNHEVTVQPPGEDQAHYNLPKFTVKPADVEVTMTSEPKNETESTQAQQEAPIQPPEEAEPSSTALRTTDPPPEHPEVTLPPSDKGQAQHSHLTEATVQPLDLELSITTEPTTEVKPSPTTEETSAQPPDPGLAITPEPTTEIGHSTALEKTRAPHPDQVQTLHRSLTEVTGPPTKLESSQDSLVQSETAPEEQKASTSTNICELCTCGDETLSCVGLSPKQRLRQVPVPEPDTYNGIFTTLNFQGNYISYLDGNVWKAYSWTEKLILSENYLTELPKDSFEGLLYLQYLDLSCNKIRYIERQTFESLPFLQYINLGCNLITKLSLGTFQAWHGMQFLHNLILNRNPLTTVEDPYLFELPALKYLDMGTTHITLTTLKNILTMTVELEKLILPSHMACCLCQFKNSIEAVCKTVKLHCNTACLTNSIHCPEEASVGNPEGAFMKMLQARKQHMSTQLTIESEAPSDSSGINLSGFGGDQLEIQLTEQLRSLIPNEDVRKFMSHVIRTLKMECSETHVQGSCAKLMLRTGLLMKLLSEQQEAKALNVEWDTDQQKTNYINENMEQNEQKEQKSSELMKEVPGDDYKNKLIFAISVTVILIILIIIFCLIEVNSHKRASEKYKDNPSISGA</sequence>
<comment type="subcellular location">
    <subcellularLocation>
        <location evidence="4">Membrane</location>
        <topology evidence="4">Single-pass type I membrane protein</topology>
    </subcellularLocation>
</comment>
<comment type="alternative products">
    <event type="alternative splicing"/>
    <isoform>
        <id>Q96QE4-1</id>
        <name>1</name>
        <sequence type="displayed"/>
    </isoform>
    <isoform>
        <id>Q96QE4-2</id>
        <name>2</name>
        <sequence type="described" ref="VSP_054513"/>
    </isoform>
</comment>
<comment type="sequence caution" evidence="4">
    <conflict type="erroneous initiation">
        <sequence resource="EMBL-CDS" id="AAR28082"/>
    </conflict>
    <text>Truncated N-terminus.</text>
</comment>
<organism>
    <name type="scientific">Homo sapiens</name>
    <name type="common">Human</name>
    <dbReference type="NCBI Taxonomy" id="9606"/>
    <lineage>
        <taxon>Eukaryota</taxon>
        <taxon>Metazoa</taxon>
        <taxon>Chordata</taxon>
        <taxon>Craniata</taxon>
        <taxon>Vertebrata</taxon>
        <taxon>Euteleostomi</taxon>
        <taxon>Mammalia</taxon>
        <taxon>Eutheria</taxon>
        <taxon>Euarchontoglires</taxon>
        <taxon>Primates</taxon>
        <taxon>Haplorrhini</taxon>
        <taxon>Catarrhini</taxon>
        <taxon>Hominidae</taxon>
        <taxon>Homo</taxon>
    </lineage>
</organism>
<gene>
    <name type="primary">LRRC37B</name>
</gene>
<feature type="signal peptide" evidence="1">
    <location>
        <begin position="1"/>
        <end position="27"/>
    </location>
</feature>
<feature type="chain" id="PRO_0000232653" description="Leucine-rich repeat-containing protein 37B">
    <location>
        <begin position="28"/>
        <end position="947"/>
    </location>
</feature>
<feature type="topological domain" description="Extracellular" evidence="1">
    <location>
        <begin position="28"/>
        <end position="905"/>
    </location>
</feature>
<feature type="transmembrane region" description="Helical" evidence="1">
    <location>
        <begin position="906"/>
        <end position="926"/>
    </location>
</feature>
<feature type="topological domain" description="Cytoplasmic" evidence="1">
    <location>
        <begin position="927"/>
        <end position="947"/>
    </location>
</feature>
<feature type="repeat" description="LRR 1">
    <location>
        <begin position="556"/>
        <end position="577"/>
    </location>
</feature>
<feature type="repeat" description="LRR 2">
    <location>
        <begin position="580"/>
        <end position="601"/>
    </location>
</feature>
<feature type="repeat" description="LRR 3">
    <location>
        <begin position="604"/>
        <end position="625"/>
    </location>
</feature>
<feature type="repeat" description="LRR 4">
    <location>
        <begin position="628"/>
        <end position="649"/>
    </location>
</feature>
<feature type="repeat" description="LRR 5">
    <location>
        <begin position="655"/>
        <end position="676"/>
    </location>
</feature>
<feature type="repeat" description="LRR 6">
    <location>
        <begin position="679"/>
        <end position="699"/>
    </location>
</feature>
<feature type="region of interest" description="Disordered" evidence="2">
    <location>
        <begin position="42"/>
        <end position="88"/>
    </location>
</feature>
<feature type="region of interest" description="Disordered" evidence="2">
    <location>
        <begin position="226"/>
        <end position="257"/>
    </location>
</feature>
<feature type="region of interest" description="Disordered" evidence="2">
    <location>
        <begin position="294"/>
        <end position="458"/>
    </location>
</feature>
<feature type="region of interest" description="Disordered" evidence="2">
    <location>
        <begin position="484"/>
        <end position="514"/>
    </location>
</feature>
<feature type="coiled-coil region" evidence="1">
    <location>
        <begin position="867"/>
        <end position="897"/>
    </location>
</feature>
<feature type="compositionally biased region" description="Polar residues" evidence="2">
    <location>
        <begin position="311"/>
        <end position="320"/>
    </location>
</feature>
<feature type="compositionally biased region" description="Polar residues" evidence="2">
    <location>
        <begin position="404"/>
        <end position="415"/>
    </location>
</feature>
<feature type="compositionally biased region" description="Polar residues" evidence="2">
    <location>
        <begin position="436"/>
        <end position="445"/>
    </location>
</feature>
<feature type="compositionally biased region" description="Polar residues" evidence="2">
    <location>
        <begin position="495"/>
        <end position="507"/>
    </location>
</feature>
<feature type="glycosylation site" description="N-linked (GlcNAc...) asparagine" evidence="1">
    <location>
        <position position="358"/>
    </location>
</feature>
<feature type="glycosylation site" description="N-linked (GlcNAc...) asparagine" evidence="1">
    <location>
        <position position="789"/>
    </location>
</feature>
<feature type="splice variant" id="VSP_054513" description="In isoform 2." evidence="3">
    <location>
        <begin position="608"/>
        <end position="658"/>
    </location>
</feature>
<feature type="sequence conflict" description="In Ref. 1; CAC44536." evidence="4" ref="1">
    <original>FWGPWPLLTWQLLSLLVKE</original>
    <variation>ITAMAPPYVATIVFTSQG</variation>
    <location>
        <begin position="6"/>
        <end position="24"/>
    </location>
</feature>
<feature type="sequence conflict" description="In Ref. 2; AAR28082." evidence="4" ref="2">
    <original>E</original>
    <variation>G</variation>
    <location>
        <position position="198"/>
    </location>
</feature>
<feature type="sequence conflict" description="In Ref. 2; AAR28082." evidence="4" ref="2">
    <original>Y</original>
    <variation>H</variation>
    <location>
        <position position="336"/>
    </location>
</feature>
<feature type="sequence conflict" description="In Ref. 2; AAR28082." evidence="4" ref="2">
    <original>K</original>
    <variation>E</variation>
    <location>
        <position position="469"/>
    </location>
</feature>
<feature type="sequence conflict" description="In Ref. 1; CAC44536." evidence="4" ref="1">
    <original>Y</original>
    <variation>S</variation>
    <location>
        <position position="604"/>
    </location>
</feature>
<feature type="sequence conflict" description="In Ref. 1; CAC44536 and 2; AAR28082." evidence="4" ref="1 2">
    <original>Q</original>
    <variation>H</variation>
    <location>
        <position position="621"/>
    </location>
</feature>
<feature type="sequence conflict" description="In Ref. 1; CAC44536." evidence="4" ref="1">
    <original>K</original>
    <variation>E</variation>
    <location>
        <position position="641"/>
    </location>
</feature>
<feature type="sequence conflict" description="In Ref. 2; AAR28082." evidence="4" ref="2">
    <original>T</original>
    <variation>S</variation>
    <location>
        <position position="702"/>
    </location>
</feature>
<feature type="sequence conflict" description="In Ref. 2; AAR28082." evidence="4" ref="2">
    <original>S</original>
    <variation>G</variation>
    <location>
        <position position="772"/>
    </location>
</feature>
<dbReference type="EMBL" id="AJ314647">
    <property type="protein sequence ID" value="CAC44536.1"/>
    <property type="molecule type" value="mRNA"/>
</dbReference>
<dbReference type="EMBL" id="AY386261">
    <property type="protein sequence ID" value="AAR28082.1"/>
    <property type="status" value="ALT_INIT"/>
    <property type="molecule type" value="mRNA"/>
</dbReference>
<dbReference type="EMBL" id="AC090616">
    <property type="status" value="NOT_ANNOTATED_CDS"/>
    <property type="molecule type" value="Genomic_DNA"/>
</dbReference>
<dbReference type="EMBL" id="BC117373">
    <property type="protein sequence ID" value="AAI17374.1"/>
    <property type="molecule type" value="mRNA"/>
</dbReference>
<dbReference type="EMBL" id="BC143581">
    <property type="protein sequence ID" value="AAI43582.1"/>
    <property type="molecule type" value="mRNA"/>
</dbReference>
<dbReference type="CCDS" id="CCDS32609.1">
    <molecule id="Q96QE4-1"/>
</dbReference>
<dbReference type="RefSeq" id="NP_443120.2">
    <molecule id="Q96QE4-1"/>
    <property type="nucleotide sequence ID" value="NM_052888.3"/>
</dbReference>
<dbReference type="SMR" id="Q96QE4"/>
<dbReference type="BioGRID" id="125332">
    <property type="interactions" value="34"/>
</dbReference>
<dbReference type="FunCoup" id="Q96QE4">
    <property type="interactions" value="7"/>
</dbReference>
<dbReference type="IntAct" id="Q96QE4">
    <property type="interactions" value="5"/>
</dbReference>
<dbReference type="MINT" id="Q96QE4"/>
<dbReference type="STRING" id="9606.ENSP00000340519"/>
<dbReference type="TCDB" id="8.A.43.1.43">
    <property type="family name" value="the neat-domain containing methaemoglobin heme sequestration (n-mhs) family"/>
</dbReference>
<dbReference type="GlyCosmos" id="Q96QE4">
    <property type="glycosylation" value="2 sites, No reported glycans"/>
</dbReference>
<dbReference type="GlyGen" id="Q96QE4">
    <property type="glycosylation" value="2 sites"/>
</dbReference>
<dbReference type="iPTMnet" id="Q96QE4"/>
<dbReference type="PhosphoSitePlus" id="Q96QE4"/>
<dbReference type="BioMuta" id="LRRC37B"/>
<dbReference type="DMDM" id="296439308"/>
<dbReference type="jPOST" id="Q96QE4"/>
<dbReference type="MassIVE" id="Q96QE4"/>
<dbReference type="PaxDb" id="9606-ENSP00000340519"/>
<dbReference type="PeptideAtlas" id="Q96QE4"/>
<dbReference type="ProteomicsDB" id="61147"/>
<dbReference type="ProteomicsDB" id="77864">
    <molecule id="Q96QE4-1"/>
</dbReference>
<dbReference type="Antibodypedia" id="2696">
    <property type="antibodies" value="74 antibodies from 13 providers"/>
</dbReference>
<dbReference type="DNASU" id="114659"/>
<dbReference type="Ensembl" id="ENST00000341671.12">
    <molecule id="Q96QE4-1"/>
    <property type="protein sequence ID" value="ENSP00000340519.7"/>
    <property type="gene ID" value="ENSG00000185158.13"/>
</dbReference>
<dbReference type="Ensembl" id="ENST00000584368.5">
    <molecule id="Q96QE4-2"/>
    <property type="protein sequence ID" value="ENSP00000463081.2"/>
    <property type="gene ID" value="ENSG00000185158.13"/>
</dbReference>
<dbReference type="GeneID" id="114659"/>
<dbReference type="KEGG" id="hsa:114659"/>
<dbReference type="UCSC" id="uc060dst.1">
    <molecule id="Q96QE4-1"/>
    <property type="organism name" value="human"/>
</dbReference>
<dbReference type="AGR" id="HGNC:29070"/>
<dbReference type="CTD" id="114659"/>
<dbReference type="DisGeNET" id="114659"/>
<dbReference type="GeneCards" id="LRRC37B"/>
<dbReference type="HGNC" id="HGNC:29070">
    <property type="gene designation" value="LRRC37B"/>
</dbReference>
<dbReference type="HPA" id="ENSG00000185158">
    <property type="expression patterns" value="Low tissue specificity"/>
</dbReference>
<dbReference type="MIM" id="616558">
    <property type="type" value="gene"/>
</dbReference>
<dbReference type="neXtProt" id="NX_Q96QE4"/>
<dbReference type="OpenTargets" id="ENSG00000185158"/>
<dbReference type="PharmGKB" id="PA142671525"/>
<dbReference type="VEuPathDB" id="HostDB:ENSG00000185158"/>
<dbReference type="eggNOG" id="ENOG502QVVG">
    <property type="taxonomic scope" value="Eukaryota"/>
</dbReference>
<dbReference type="GeneTree" id="ENSGT00530000063282"/>
<dbReference type="HOGENOM" id="CLU_015957_0_0_1"/>
<dbReference type="InParanoid" id="Q96QE4"/>
<dbReference type="OrthoDB" id="9539893at2759"/>
<dbReference type="PAN-GO" id="Q96QE4">
    <property type="GO annotations" value="0 GO annotations based on evolutionary models"/>
</dbReference>
<dbReference type="PhylomeDB" id="Q96QE4"/>
<dbReference type="TreeFam" id="TF341959"/>
<dbReference type="PathwayCommons" id="Q96QE4"/>
<dbReference type="SignaLink" id="Q96QE4"/>
<dbReference type="BioGRID-ORCS" id="114659">
    <property type="hits" value="256 hits in 1154 CRISPR screens"/>
</dbReference>
<dbReference type="ChiTaRS" id="LRRC37B">
    <property type="organism name" value="human"/>
</dbReference>
<dbReference type="GenomeRNAi" id="114659"/>
<dbReference type="Pharos" id="Q96QE4">
    <property type="development level" value="Tdark"/>
</dbReference>
<dbReference type="PRO" id="PR:Q96QE4"/>
<dbReference type="Proteomes" id="UP000005640">
    <property type="component" value="Chromosome 17"/>
</dbReference>
<dbReference type="RNAct" id="Q96QE4">
    <property type="molecule type" value="protein"/>
</dbReference>
<dbReference type="Bgee" id="ENSG00000185158">
    <property type="expression patterns" value="Expressed in cerebellar cortex and 99 other cell types or tissues"/>
</dbReference>
<dbReference type="ExpressionAtlas" id="Q96QE4">
    <property type="expression patterns" value="baseline and differential"/>
</dbReference>
<dbReference type="GO" id="GO:0016020">
    <property type="term" value="C:membrane"/>
    <property type="evidence" value="ECO:0007669"/>
    <property type="project" value="UniProtKB-SubCell"/>
</dbReference>
<dbReference type="Gene3D" id="3.80.10.10">
    <property type="entry name" value="Ribonuclease Inhibitor"/>
    <property type="match status" value="1"/>
</dbReference>
<dbReference type="InterPro" id="IPR001611">
    <property type="entry name" value="Leu-rich_rpt"/>
</dbReference>
<dbReference type="InterPro" id="IPR003591">
    <property type="entry name" value="Leu-rich_rpt_typical-subtyp"/>
</dbReference>
<dbReference type="InterPro" id="IPR032675">
    <property type="entry name" value="LRR_dom_sf"/>
</dbReference>
<dbReference type="InterPro" id="IPR015753">
    <property type="entry name" value="LRRC37"/>
</dbReference>
<dbReference type="InterPro" id="IPR032754">
    <property type="entry name" value="LRRC37_N"/>
</dbReference>
<dbReference type="InterPro" id="IPR029423">
    <property type="entry name" value="LRRC37AB_C"/>
</dbReference>
<dbReference type="PANTHER" id="PTHR23045">
    <property type="entry name" value="LEUCINE-RICH REPEAT-CONTAINING PROTEIN 37A"/>
    <property type="match status" value="1"/>
</dbReference>
<dbReference type="PANTHER" id="PTHR23045:SF19">
    <property type="entry name" value="LEUCINE-RICH REPEAT-CONTAINING PROTEIN 37A-RELATED"/>
    <property type="match status" value="1"/>
</dbReference>
<dbReference type="Pfam" id="PF13855">
    <property type="entry name" value="LRR_8"/>
    <property type="match status" value="1"/>
</dbReference>
<dbReference type="Pfam" id="PF15779">
    <property type="entry name" value="LRRC37"/>
    <property type="match status" value="3"/>
</dbReference>
<dbReference type="Pfam" id="PF14914">
    <property type="entry name" value="LRRC37AB_C"/>
    <property type="match status" value="1"/>
</dbReference>
<dbReference type="SMART" id="SM00369">
    <property type="entry name" value="LRR_TYP"/>
    <property type="match status" value="4"/>
</dbReference>
<dbReference type="SUPFAM" id="SSF52058">
    <property type="entry name" value="L domain-like"/>
    <property type="match status" value="1"/>
</dbReference>
<dbReference type="PROSITE" id="PS51450">
    <property type="entry name" value="LRR"/>
    <property type="match status" value="4"/>
</dbReference>
<reference key="1">
    <citation type="journal article" date="2000" name="Genomics">
        <title>A common set of at least 11 functional genes is lost in the majority of NF1 patients with gross deletions.</title>
        <authorList>
            <person name="Jenne D.E."/>
            <person name="Tinschert S."/>
            <person name="Stegmann E."/>
            <person name="Reimann H."/>
            <person name="Nuernberg P."/>
            <person name="Horn D."/>
            <person name="Naumann I."/>
            <person name="Buske A."/>
            <person name="Thiel G."/>
        </authorList>
    </citation>
    <scope>NUCLEOTIDE SEQUENCE [MRNA] (ISOFORM 1)</scope>
</reference>
<reference key="2">
    <citation type="submission" date="2003-09" db="EMBL/GenBank/DDBJ databases">
        <authorList>
            <person name="Wolkowicz M.J."/>
            <person name="Shetty J."/>
            <person name="Herr J.C."/>
        </authorList>
    </citation>
    <scope>NUCLEOTIDE SEQUENCE [MRNA] (ISOFORM 1)</scope>
    <source>
        <tissue>Testis</tissue>
    </source>
</reference>
<reference key="3">
    <citation type="journal article" date="2006" name="Nature">
        <title>DNA sequence of human chromosome 17 and analysis of rearrangement in the human lineage.</title>
        <authorList>
            <person name="Zody M.C."/>
            <person name="Garber M."/>
            <person name="Adams D.J."/>
            <person name="Sharpe T."/>
            <person name="Harrow J."/>
            <person name="Lupski J.R."/>
            <person name="Nicholson C."/>
            <person name="Searle S.M."/>
            <person name="Wilming L."/>
            <person name="Young S.K."/>
            <person name="Abouelleil A."/>
            <person name="Allen N.R."/>
            <person name="Bi W."/>
            <person name="Bloom T."/>
            <person name="Borowsky M.L."/>
            <person name="Bugalter B.E."/>
            <person name="Butler J."/>
            <person name="Chang J.L."/>
            <person name="Chen C.-K."/>
            <person name="Cook A."/>
            <person name="Corum B."/>
            <person name="Cuomo C.A."/>
            <person name="de Jong P.J."/>
            <person name="DeCaprio D."/>
            <person name="Dewar K."/>
            <person name="FitzGerald M."/>
            <person name="Gilbert J."/>
            <person name="Gibson R."/>
            <person name="Gnerre S."/>
            <person name="Goldstein S."/>
            <person name="Grafham D.V."/>
            <person name="Grocock R."/>
            <person name="Hafez N."/>
            <person name="Hagopian D.S."/>
            <person name="Hart E."/>
            <person name="Norman C.H."/>
            <person name="Humphray S."/>
            <person name="Jaffe D.B."/>
            <person name="Jones M."/>
            <person name="Kamal M."/>
            <person name="Khodiyar V.K."/>
            <person name="LaButti K."/>
            <person name="Laird G."/>
            <person name="Lehoczky J."/>
            <person name="Liu X."/>
            <person name="Lokyitsang T."/>
            <person name="Loveland J."/>
            <person name="Lui A."/>
            <person name="Macdonald P."/>
            <person name="Major J.E."/>
            <person name="Matthews L."/>
            <person name="Mauceli E."/>
            <person name="McCarroll S.A."/>
            <person name="Mihalev A.H."/>
            <person name="Mudge J."/>
            <person name="Nguyen C."/>
            <person name="Nicol R."/>
            <person name="O'Leary S.B."/>
            <person name="Osoegawa K."/>
            <person name="Schwartz D.C."/>
            <person name="Shaw-Smith C."/>
            <person name="Stankiewicz P."/>
            <person name="Steward C."/>
            <person name="Swarbreck D."/>
            <person name="Venkataraman V."/>
            <person name="Whittaker C.A."/>
            <person name="Yang X."/>
            <person name="Zimmer A.R."/>
            <person name="Bradley A."/>
            <person name="Hubbard T."/>
            <person name="Birren B.W."/>
            <person name="Rogers J."/>
            <person name="Lander E.S."/>
            <person name="Nusbaum C."/>
        </authorList>
    </citation>
    <scope>NUCLEOTIDE SEQUENCE [LARGE SCALE GENOMIC DNA]</scope>
</reference>
<reference key="4">
    <citation type="journal article" date="2004" name="Genome Res.">
        <title>The status, quality, and expansion of the NIH full-length cDNA project: the Mammalian Gene Collection (MGC).</title>
        <authorList>
            <consortium name="The MGC Project Team"/>
        </authorList>
    </citation>
    <scope>NUCLEOTIDE SEQUENCE [LARGE SCALE MRNA] (ISOFORM 2)</scope>
    <source>
        <tissue>Liver</tissue>
    </source>
</reference>
<accession>Q96QE4</accession>
<accession>Q17RC9</accession>
<accession>Q5YKG6</accession>
<proteinExistence type="evidence at protein level"/>
<evidence type="ECO:0000255" key="1"/>
<evidence type="ECO:0000256" key="2">
    <source>
        <dbReference type="SAM" id="MobiDB-lite"/>
    </source>
</evidence>
<evidence type="ECO:0000303" key="3">
    <source>
    </source>
</evidence>
<evidence type="ECO:0000305" key="4"/>
<keyword id="KW-0025">Alternative splicing</keyword>
<keyword id="KW-0175">Coiled coil</keyword>
<keyword id="KW-0325">Glycoprotein</keyword>
<keyword id="KW-0433">Leucine-rich repeat</keyword>
<keyword id="KW-0472">Membrane</keyword>
<keyword id="KW-1267">Proteomics identification</keyword>
<keyword id="KW-1185">Reference proteome</keyword>
<keyword id="KW-0677">Repeat</keyword>
<keyword id="KW-0732">Signal</keyword>
<keyword id="KW-0812">Transmembrane</keyword>
<keyword id="KW-1133">Transmembrane helix</keyword>
<protein>
    <recommendedName>
        <fullName>Leucine-rich repeat-containing protein 37B</fullName>
    </recommendedName>
    <alternativeName>
        <fullName>C66 SLIT-like testicular protein</fullName>
    </alternativeName>
</protein>